<reference key="1">
    <citation type="journal article" date="2005" name="Nature">
        <title>The genome sequence of the rice blast fungus Magnaporthe grisea.</title>
        <authorList>
            <person name="Dean R.A."/>
            <person name="Talbot N.J."/>
            <person name="Ebbole D.J."/>
            <person name="Farman M.L."/>
            <person name="Mitchell T.K."/>
            <person name="Orbach M.J."/>
            <person name="Thon M.R."/>
            <person name="Kulkarni R."/>
            <person name="Xu J.-R."/>
            <person name="Pan H."/>
            <person name="Read N.D."/>
            <person name="Lee Y.-H."/>
            <person name="Carbone I."/>
            <person name="Brown D."/>
            <person name="Oh Y.Y."/>
            <person name="Donofrio N."/>
            <person name="Jeong J.S."/>
            <person name="Soanes D.M."/>
            <person name="Djonovic S."/>
            <person name="Kolomiets E."/>
            <person name="Rehmeyer C."/>
            <person name="Li W."/>
            <person name="Harding M."/>
            <person name="Kim S."/>
            <person name="Lebrun M.-H."/>
            <person name="Bohnert H."/>
            <person name="Coughlan S."/>
            <person name="Butler J."/>
            <person name="Calvo S.E."/>
            <person name="Ma L.-J."/>
            <person name="Nicol R."/>
            <person name="Purcell S."/>
            <person name="Nusbaum C."/>
            <person name="Galagan J.E."/>
            <person name="Birren B.W."/>
        </authorList>
    </citation>
    <scope>NUCLEOTIDE SEQUENCE [LARGE SCALE GENOMIC DNA]</scope>
    <source>
        <strain>70-15 / ATCC MYA-4617 / FGSC 8958</strain>
    </source>
</reference>
<reference key="2">
    <citation type="journal article" date="2002" name="Plant Cell">
        <title>Two novel fungal virulence genes specifically expressed in appressoria of the rice blast fungus.</title>
        <authorList>
            <person name="Xue C."/>
            <person name="Park G."/>
            <person name="Choi W."/>
            <person name="Zheng L."/>
            <person name="Dean R.A."/>
            <person name="Xu J.R."/>
        </authorList>
    </citation>
    <scope>INDUCTION</scope>
    <scope>FUNCTION</scope>
    <scope>DISRUPTION PHENOTYPE</scope>
    <scope>SUBCELLULAR LOCATION</scope>
</reference>
<reference key="3">
    <citation type="journal article" date="2013" name="Gene Expr. Patterns">
        <title>Complexity of roles and regulation of the PMK1-MAPK pathway in mycelium development, conidiation and appressorium formation in Magnaporthe oryzae.</title>
        <authorList>
            <person name="Jin Q."/>
            <person name="Li C."/>
            <person name="Li Y."/>
            <person name="Shang J."/>
            <person name="Li D."/>
            <person name="Chen B."/>
            <person name="Dong H."/>
        </authorList>
    </citation>
    <scope>FUNCTION</scope>
    <scope>DISRUPTION PHENOTYPE</scope>
</reference>
<proteinExistence type="evidence at transcript level"/>
<organism>
    <name type="scientific">Pyricularia oryzae (strain 70-15 / ATCC MYA-4617 / FGSC 8958)</name>
    <name type="common">Rice blast fungus</name>
    <name type="synonym">Magnaporthe oryzae</name>
    <dbReference type="NCBI Taxonomy" id="242507"/>
    <lineage>
        <taxon>Eukaryota</taxon>
        <taxon>Fungi</taxon>
        <taxon>Dikarya</taxon>
        <taxon>Ascomycota</taxon>
        <taxon>Pezizomycotina</taxon>
        <taxon>Sordariomycetes</taxon>
        <taxon>Sordariomycetidae</taxon>
        <taxon>Magnaporthales</taxon>
        <taxon>Pyriculariaceae</taxon>
        <taxon>Pyricularia</taxon>
    </lineage>
</organism>
<gene>
    <name evidence="6" type="primary">GAS1</name>
    <name evidence="1" type="synonym">MAS3</name>
    <name type="ORF">MGG_12337</name>
</gene>
<comment type="function">
    <text evidence="4 5">Appressoria-specific virulence factor required for appressorial penetration in host and lesion development.</text>
</comment>
<comment type="subcellular location">
    <subcellularLocation>
        <location evidence="4">Cytoplasm</location>
    </subcellularLocation>
    <text evidence="4">Exclusively located in the cytoplasm of appressoria cells.</text>
</comment>
<comment type="induction">
    <text evidence="4">Expressed specifically during appressorium formation.</text>
</comment>
<comment type="disruption phenotype">
    <text evidence="4 5">Does not affect vegetative growth, conidiation, or appressoria formation, but reduces in appressorial penetration and lesion development.</text>
</comment>
<accession>G4MSQ1</accession>
<name>GAS1_PYRO7</name>
<keyword id="KW-0963">Cytoplasm</keyword>
<keyword id="KW-1185">Reference proteome</keyword>
<keyword id="KW-0732">Signal</keyword>
<keyword id="KW-0843">Virulence</keyword>
<evidence type="ECO:0000250" key="1">
    <source>
        <dbReference type="UniProtKB" id="Q96TN6"/>
    </source>
</evidence>
<evidence type="ECO:0000255" key="2"/>
<evidence type="ECO:0000256" key="3">
    <source>
        <dbReference type="SAM" id="MobiDB-lite"/>
    </source>
</evidence>
<evidence type="ECO:0000269" key="4">
    <source>
    </source>
</evidence>
<evidence type="ECO:0000269" key="5">
    <source>
    </source>
</evidence>
<evidence type="ECO:0000303" key="6">
    <source>
    </source>
</evidence>
<protein>
    <recommendedName>
        <fullName evidence="6">Appressoria-specific virulence factor GAS1</fullName>
    </recommendedName>
</protein>
<dbReference type="EMBL" id="CM001232">
    <property type="protein sequence ID" value="EHA55472.1"/>
    <property type="molecule type" value="Genomic_DNA"/>
</dbReference>
<dbReference type="RefSeq" id="XP_003715279.1">
    <property type="nucleotide sequence ID" value="XM_003715231.1"/>
</dbReference>
<dbReference type="EnsemblFungi" id="MGG_12337T0">
    <property type="protein sequence ID" value="MGG_12337T0"/>
    <property type="gene ID" value="MGG_12337"/>
</dbReference>
<dbReference type="GeneID" id="5050935"/>
<dbReference type="KEGG" id="mgr:MGG_12337"/>
<dbReference type="VEuPathDB" id="FungiDB:MGG_12337"/>
<dbReference type="eggNOG" id="ENOG502QUBE">
    <property type="taxonomic scope" value="Eukaryota"/>
</dbReference>
<dbReference type="HOGENOM" id="CLU_047729_3_2_1"/>
<dbReference type="InParanoid" id="G4MSQ1"/>
<dbReference type="OMA" id="VQMAQTN"/>
<dbReference type="OrthoDB" id="5418436at2759"/>
<dbReference type="Proteomes" id="UP000009058">
    <property type="component" value="Chromosome 2"/>
</dbReference>
<dbReference type="GO" id="GO:0005737">
    <property type="term" value="C:cytoplasm"/>
    <property type="evidence" value="ECO:0007669"/>
    <property type="project" value="UniProtKB-SubCell"/>
</dbReference>
<dbReference type="InterPro" id="IPR021476">
    <property type="entry name" value="Egh16-like"/>
</dbReference>
<dbReference type="PANTHER" id="PTHR34618:SF4">
    <property type="entry name" value="CAS1"/>
    <property type="match status" value="1"/>
</dbReference>
<dbReference type="PANTHER" id="PTHR34618">
    <property type="entry name" value="SURFACE PROTEIN MAS1, PUTATIVE-RELATED"/>
    <property type="match status" value="1"/>
</dbReference>
<dbReference type="Pfam" id="PF11327">
    <property type="entry name" value="Egh16-like"/>
    <property type="match status" value="1"/>
</dbReference>
<feature type="signal peptide" evidence="2">
    <location>
        <begin position="1"/>
        <end position="21"/>
    </location>
</feature>
<feature type="chain" id="PRO_5003465464" description="Appressoria-specific virulence factor GAS1">
    <location>
        <begin position="22"/>
        <end position="251"/>
    </location>
</feature>
<feature type="region of interest" description="Disordered" evidence="3">
    <location>
        <begin position="40"/>
        <end position="76"/>
    </location>
</feature>
<feature type="compositionally biased region" description="Polar residues" evidence="3">
    <location>
        <begin position="54"/>
        <end position="66"/>
    </location>
</feature>
<sequence>MSLKSLIAATILAAPLVAGHGAIIKAVGDAGGEGMGLGVVTSTPRDGTRRDPFQQDSTRFKGQQADTFGETVGGGQNDVESMTKAIMAETGSQLPQISPGGSLQMTLHQVNGDGAGPYTCELNDDASGAQWQQIRVTTTPPGRNSRNRDGAMTDFPLVAEIPQRQACTGTVAGQTNVCLVRCMNAARAGPFGGVVAAQLAGSQTPQAARRALAESVKRSELIVSGLKKRGYNIADLSQEEIDELRRDGEIA</sequence>